<protein>
    <recommendedName>
        <fullName evidence="1">Threonine--tRNA ligase</fullName>
        <ecNumber evidence="1">6.1.1.3</ecNumber>
    </recommendedName>
    <alternativeName>
        <fullName evidence="1">Threonyl-tRNA synthetase</fullName>
        <shortName evidence="1">ThrRS</shortName>
    </alternativeName>
</protein>
<comment type="function">
    <text evidence="1">Catalyzes the attachment of threonine to tRNA(Thr) in a two-step reaction: L-threonine is first activated by ATP to form Thr-AMP and then transferred to the acceptor end of tRNA(Thr). Also edits incorrectly charged L-seryl-tRNA(Thr).</text>
</comment>
<comment type="catalytic activity">
    <reaction evidence="1">
        <text>tRNA(Thr) + L-threonine + ATP = L-threonyl-tRNA(Thr) + AMP + diphosphate + H(+)</text>
        <dbReference type="Rhea" id="RHEA:24624"/>
        <dbReference type="Rhea" id="RHEA-COMP:9670"/>
        <dbReference type="Rhea" id="RHEA-COMP:9704"/>
        <dbReference type="ChEBI" id="CHEBI:15378"/>
        <dbReference type="ChEBI" id="CHEBI:30616"/>
        <dbReference type="ChEBI" id="CHEBI:33019"/>
        <dbReference type="ChEBI" id="CHEBI:57926"/>
        <dbReference type="ChEBI" id="CHEBI:78442"/>
        <dbReference type="ChEBI" id="CHEBI:78534"/>
        <dbReference type="ChEBI" id="CHEBI:456215"/>
        <dbReference type="EC" id="6.1.1.3"/>
    </reaction>
</comment>
<comment type="cofactor">
    <cofactor evidence="1">
        <name>Zn(2+)</name>
        <dbReference type="ChEBI" id="CHEBI:29105"/>
    </cofactor>
    <text evidence="1">Binds 1 zinc ion per subunit.</text>
</comment>
<comment type="subunit">
    <text evidence="1">Homodimer.</text>
</comment>
<comment type="subcellular location">
    <subcellularLocation>
        <location evidence="1">Cytoplasm</location>
    </subcellularLocation>
</comment>
<comment type="similarity">
    <text evidence="1">Belongs to the class-II aminoacyl-tRNA synthetase family.</text>
</comment>
<proteinExistence type="inferred from homology"/>
<name>SYT_PETMO</name>
<accession>A9BHF0</accession>
<sequence>MVKITYPDNSVQEFKDGITPAEIAKGISEGLYRNAIAAEINGELKDLNTPIMQDSTIKLITLDDEIAPKIYRHTMAHIMAQAVARIFGEDRVKLAIGPVIENGFYYDFDIEGHNLSEEDFSKIEEEMKKIIKEDIKIIRKEVNKKEAIELFKDQPYKLELIEELEEDTISVYFQGDFYDLCRGPHLPSTGYVKYFKLLSVSGAYWRGDEKNKMLQRIYGTAFPKKEQLDDYLNMIEEAKRRDHRKLGPKLNLFMLQSEMAPGMPFFLPNGKIVLNELMAYSRQVHKKYGYVEVETPQIMNIKLWHQSGHWDHYKENMFFTEKEDMPMAVKPMNCPGHILIYKNNFVSYRDLPIRMFEFGKVHRYERSGVLHGLFRVRAFTQDDAHIFCMPSQMEEEIIKVIQLTNEIFSTFGFKYEAILSTMPEDHMGDIESWERATDALKKALEKSNMEYRIDEGEGAFYGPKIDFNVTDSLGRKWQCTTIQLDFQMPERFDMVYADENDAQKRPVMIHRAIFGSLERFFGILIENFAGEFPTWLSPVQVSILPVSEKFNEEAKKFSRILEQEGIRVYVNDSDATVGYKIRNEQMKKVPYMIVFGEKEMNSDTINIRTRKGDTIENVSKERFIEEIKNEIKNRNLDLTF</sequence>
<organism>
    <name type="scientific">Petrotoga mobilis (strain DSM 10674 / SJ95)</name>
    <dbReference type="NCBI Taxonomy" id="403833"/>
    <lineage>
        <taxon>Bacteria</taxon>
        <taxon>Thermotogati</taxon>
        <taxon>Thermotogota</taxon>
        <taxon>Thermotogae</taxon>
        <taxon>Petrotogales</taxon>
        <taxon>Petrotogaceae</taxon>
        <taxon>Petrotoga</taxon>
    </lineage>
</organism>
<dbReference type="EC" id="6.1.1.3" evidence="1"/>
<dbReference type="EMBL" id="CP000879">
    <property type="protein sequence ID" value="ABX31559.1"/>
    <property type="molecule type" value="Genomic_DNA"/>
</dbReference>
<dbReference type="RefSeq" id="WP_012208662.1">
    <property type="nucleotide sequence ID" value="NC_010003.1"/>
</dbReference>
<dbReference type="SMR" id="A9BHF0"/>
<dbReference type="STRING" id="403833.Pmob_0835"/>
<dbReference type="KEGG" id="pmo:Pmob_0835"/>
<dbReference type="eggNOG" id="COG0441">
    <property type="taxonomic scope" value="Bacteria"/>
</dbReference>
<dbReference type="HOGENOM" id="CLU_008554_0_1_0"/>
<dbReference type="OrthoDB" id="9802304at2"/>
<dbReference type="Proteomes" id="UP000000789">
    <property type="component" value="Chromosome"/>
</dbReference>
<dbReference type="GO" id="GO:0005737">
    <property type="term" value="C:cytoplasm"/>
    <property type="evidence" value="ECO:0007669"/>
    <property type="project" value="UniProtKB-SubCell"/>
</dbReference>
<dbReference type="GO" id="GO:0005524">
    <property type="term" value="F:ATP binding"/>
    <property type="evidence" value="ECO:0007669"/>
    <property type="project" value="UniProtKB-UniRule"/>
</dbReference>
<dbReference type="GO" id="GO:0046872">
    <property type="term" value="F:metal ion binding"/>
    <property type="evidence" value="ECO:0007669"/>
    <property type="project" value="UniProtKB-KW"/>
</dbReference>
<dbReference type="GO" id="GO:0004829">
    <property type="term" value="F:threonine-tRNA ligase activity"/>
    <property type="evidence" value="ECO:0007669"/>
    <property type="project" value="UniProtKB-UniRule"/>
</dbReference>
<dbReference type="GO" id="GO:0000049">
    <property type="term" value="F:tRNA binding"/>
    <property type="evidence" value="ECO:0007669"/>
    <property type="project" value="UniProtKB-KW"/>
</dbReference>
<dbReference type="GO" id="GO:0006435">
    <property type="term" value="P:threonyl-tRNA aminoacylation"/>
    <property type="evidence" value="ECO:0007669"/>
    <property type="project" value="UniProtKB-UniRule"/>
</dbReference>
<dbReference type="CDD" id="cd01667">
    <property type="entry name" value="TGS_ThrRS"/>
    <property type="match status" value="1"/>
</dbReference>
<dbReference type="CDD" id="cd00860">
    <property type="entry name" value="ThrRS_anticodon"/>
    <property type="match status" value="1"/>
</dbReference>
<dbReference type="CDD" id="cd00771">
    <property type="entry name" value="ThrRS_core"/>
    <property type="match status" value="1"/>
</dbReference>
<dbReference type="FunFam" id="3.10.20.30:FF:000005">
    <property type="entry name" value="Threonine--tRNA ligase"/>
    <property type="match status" value="1"/>
</dbReference>
<dbReference type="FunFam" id="3.30.54.20:FF:000002">
    <property type="entry name" value="Threonine--tRNA ligase"/>
    <property type="match status" value="1"/>
</dbReference>
<dbReference type="FunFam" id="3.30.930.10:FF:000002">
    <property type="entry name" value="Threonine--tRNA ligase"/>
    <property type="match status" value="1"/>
</dbReference>
<dbReference type="FunFam" id="3.40.50.800:FF:000001">
    <property type="entry name" value="Threonine--tRNA ligase"/>
    <property type="match status" value="1"/>
</dbReference>
<dbReference type="FunFam" id="3.30.980.10:FF:000005">
    <property type="entry name" value="Threonyl-tRNA synthetase, mitochondrial"/>
    <property type="match status" value="1"/>
</dbReference>
<dbReference type="Gene3D" id="3.10.20.30">
    <property type="match status" value="1"/>
</dbReference>
<dbReference type="Gene3D" id="3.30.54.20">
    <property type="match status" value="1"/>
</dbReference>
<dbReference type="Gene3D" id="3.40.50.800">
    <property type="entry name" value="Anticodon-binding domain"/>
    <property type="match status" value="1"/>
</dbReference>
<dbReference type="Gene3D" id="3.30.930.10">
    <property type="entry name" value="Bira Bifunctional Protein, Domain 2"/>
    <property type="match status" value="1"/>
</dbReference>
<dbReference type="Gene3D" id="3.30.980.10">
    <property type="entry name" value="Threonyl-trna Synthetase, Chain A, domain 2"/>
    <property type="match status" value="1"/>
</dbReference>
<dbReference type="HAMAP" id="MF_00184">
    <property type="entry name" value="Thr_tRNA_synth"/>
    <property type="match status" value="1"/>
</dbReference>
<dbReference type="InterPro" id="IPR002314">
    <property type="entry name" value="aa-tRNA-synt_IIb"/>
</dbReference>
<dbReference type="InterPro" id="IPR006195">
    <property type="entry name" value="aa-tRNA-synth_II"/>
</dbReference>
<dbReference type="InterPro" id="IPR045864">
    <property type="entry name" value="aa-tRNA-synth_II/BPL/LPL"/>
</dbReference>
<dbReference type="InterPro" id="IPR004154">
    <property type="entry name" value="Anticodon-bd"/>
</dbReference>
<dbReference type="InterPro" id="IPR036621">
    <property type="entry name" value="Anticodon-bd_dom_sf"/>
</dbReference>
<dbReference type="InterPro" id="IPR012675">
    <property type="entry name" value="Beta-grasp_dom_sf"/>
</dbReference>
<dbReference type="InterPro" id="IPR004095">
    <property type="entry name" value="TGS"/>
</dbReference>
<dbReference type="InterPro" id="IPR012676">
    <property type="entry name" value="TGS-like"/>
</dbReference>
<dbReference type="InterPro" id="IPR002320">
    <property type="entry name" value="Thr-tRNA-ligase_IIa"/>
</dbReference>
<dbReference type="InterPro" id="IPR018163">
    <property type="entry name" value="Thr/Ala-tRNA-synth_IIc_edit"/>
</dbReference>
<dbReference type="InterPro" id="IPR047246">
    <property type="entry name" value="ThrRS_anticodon"/>
</dbReference>
<dbReference type="InterPro" id="IPR033728">
    <property type="entry name" value="ThrRS_core"/>
</dbReference>
<dbReference type="InterPro" id="IPR012947">
    <property type="entry name" value="tRNA_SAD"/>
</dbReference>
<dbReference type="NCBIfam" id="TIGR00418">
    <property type="entry name" value="thrS"/>
    <property type="match status" value="1"/>
</dbReference>
<dbReference type="PANTHER" id="PTHR11451:SF44">
    <property type="entry name" value="THREONINE--TRNA LIGASE, CHLOROPLASTIC_MITOCHONDRIAL 2"/>
    <property type="match status" value="1"/>
</dbReference>
<dbReference type="PANTHER" id="PTHR11451">
    <property type="entry name" value="THREONINE-TRNA LIGASE"/>
    <property type="match status" value="1"/>
</dbReference>
<dbReference type="Pfam" id="PF03129">
    <property type="entry name" value="HGTP_anticodon"/>
    <property type="match status" value="1"/>
</dbReference>
<dbReference type="Pfam" id="PF02824">
    <property type="entry name" value="TGS"/>
    <property type="match status" value="1"/>
</dbReference>
<dbReference type="Pfam" id="PF00587">
    <property type="entry name" value="tRNA-synt_2b"/>
    <property type="match status" value="1"/>
</dbReference>
<dbReference type="Pfam" id="PF07973">
    <property type="entry name" value="tRNA_SAD"/>
    <property type="match status" value="1"/>
</dbReference>
<dbReference type="PRINTS" id="PR01047">
    <property type="entry name" value="TRNASYNTHTHR"/>
</dbReference>
<dbReference type="SMART" id="SM00863">
    <property type="entry name" value="tRNA_SAD"/>
    <property type="match status" value="1"/>
</dbReference>
<dbReference type="SUPFAM" id="SSF52954">
    <property type="entry name" value="Class II aaRS ABD-related"/>
    <property type="match status" value="1"/>
</dbReference>
<dbReference type="SUPFAM" id="SSF55681">
    <property type="entry name" value="Class II aaRS and biotin synthetases"/>
    <property type="match status" value="1"/>
</dbReference>
<dbReference type="SUPFAM" id="SSF81271">
    <property type="entry name" value="TGS-like"/>
    <property type="match status" value="1"/>
</dbReference>
<dbReference type="SUPFAM" id="SSF55186">
    <property type="entry name" value="ThrRS/AlaRS common domain"/>
    <property type="match status" value="1"/>
</dbReference>
<dbReference type="PROSITE" id="PS50862">
    <property type="entry name" value="AA_TRNA_LIGASE_II"/>
    <property type="match status" value="1"/>
</dbReference>
<dbReference type="PROSITE" id="PS51880">
    <property type="entry name" value="TGS"/>
    <property type="match status" value="1"/>
</dbReference>
<reference key="1">
    <citation type="submission" date="2007-11" db="EMBL/GenBank/DDBJ databases">
        <title>Complete sequence of Petroga mobilis SJ95.</title>
        <authorList>
            <consortium name="US DOE Joint Genome Institute"/>
            <person name="Copeland A."/>
            <person name="Lucas S."/>
            <person name="Lapidus A."/>
            <person name="Barry K."/>
            <person name="Glavina del Rio T."/>
            <person name="Dalin E."/>
            <person name="Tice H."/>
            <person name="Pitluck S."/>
            <person name="Meincke L."/>
            <person name="Brettin T."/>
            <person name="Bruce D."/>
            <person name="Detter J.C."/>
            <person name="Han C."/>
            <person name="Kuske C.R."/>
            <person name="Schmutz J."/>
            <person name="Larimer F."/>
            <person name="Land M."/>
            <person name="Hauser L."/>
            <person name="Kyrpides N."/>
            <person name="Mikhailova N."/>
            <person name="Noll K."/>
            <person name="Richardson P."/>
        </authorList>
    </citation>
    <scope>NUCLEOTIDE SEQUENCE [LARGE SCALE GENOMIC DNA]</scope>
    <source>
        <strain>DSM 10674 / SJ95</strain>
    </source>
</reference>
<keyword id="KW-0030">Aminoacyl-tRNA synthetase</keyword>
<keyword id="KW-0067">ATP-binding</keyword>
<keyword id="KW-0963">Cytoplasm</keyword>
<keyword id="KW-0436">Ligase</keyword>
<keyword id="KW-0479">Metal-binding</keyword>
<keyword id="KW-0547">Nucleotide-binding</keyword>
<keyword id="KW-0648">Protein biosynthesis</keyword>
<keyword id="KW-0694">RNA-binding</keyword>
<keyword id="KW-0820">tRNA-binding</keyword>
<keyword id="KW-0862">Zinc</keyword>
<evidence type="ECO:0000255" key="1">
    <source>
        <dbReference type="HAMAP-Rule" id="MF_00184"/>
    </source>
</evidence>
<evidence type="ECO:0000255" key="2">
    <source>
        <dbReference type="PROSITE-ProRule" id="PRU01228"/>
    </source>
</evidence>
<gene>
    <name evidence="1" type="primary">thrS</name>
    <name type="ordered locus">Pmob_0835</name>
</gene>
<feature type="chain" id="PRO_1000077367" description="Threonine--tRNA ligase">
    <location>
        <begin position="1"/>
        <end position="640"/>
    </location>
</feature>
<feature type="domain" description="TGS" evidence="2">
    <location>
        <begin position="1"/>
        <end position="61"/>
    </location>
</feature>
<feature type="region of interest" description="Catalytic" evidence="1">
    <location>
        <begin position="242"/>
        <end position="533"/>
    </location>
</feature>
<feature type="binding site" evidence="1">
    <location>
        <position position="334"/>
    </location>
    <ligand>
        <name>Zn(2+)</name>
        <dbReference type="ChEBI" id="CHEBI:29105"/>
    </ligand>
</feature>
<feature type="binding site" evidence="1">
    <location>
        <position position="385"/>
    </location>
    <ligand>
        <name>Zn(2+)</name>
        <dbReference type="ChEBI" id="CHEBI:29105"/>
    </ligand>
</feature>
<feature type="binding site" evidence="1">
    <location>
        <position position="510"/>
    </location>
    <ligand>
        <name>Zn(2+)</name>
        <dbReference type="ChEBI" id="CHEBI:29105"/>
    </ligand>
</feature>